<proteinExistence type="inferred from homology"/>
<sequence length="279" mass="30840">MKIILADSAGFCFGVKRATNLAFDAAEQFEHICSLGPIIHSPQVVKKLEEKGIKVIRKVEDIDHGAVIIRSHGITAEELDIIHDRELKIVDATCPFVKKAQDYATMLCNEGYSVVLVGEKDHPEVQGIISYTRGGEVFVVADCKEAQRLPNRPKLGIVAQTTQSFKNLQQIADICLGKSKEVRIFNTICDATSVRQNEARKIACEADLMLVVGGFNSANTTRLAQICQEIQPRTFHVETVEQIQDGWFEGVECVGITAGASTPRWIIDQVVERVSDMSK</sequence>
<gene>
    <name evidence="1" type="primary">ispH</name>
    <name type="ordered locus">Pcar_1883</name>
</gene>
<name>ISPH_SYNC1</name>
<comment type="function">
    <text evidence="1">Catalyzes the conversion of 1-hydroxy-2-methyl-2-(E)-butenyl 4-diphosphate (HMBPP) into a mixture of isopentenyl diphosphate (IPP) and dimethylallyl diphosphate (DMAPP). Acts in the terminal step of the DOXP/MEP pathway for isoprenoid precursor biosynthesis.</text>
</comment>
<comment type="catalytic activity">
    <reaction evidence="1">
        <text>isopentenyl diphosphate + 2 oxidized [2Fe-2S]-[ferredoxin] + H2O = (2E)-4-hydroxy-3-methylbut-2-enyl diphosphate + 2 reduced [2Fe-2S]-[ferredoxin] + 2 H(+)</text>
        <dbReference type="Rhea" id="RHEA:24488"/>
        <dbReference type="Rhea" id="RHEA-COMP:10000"/>
        <dbReference type="Rhea" id="RHEA-COMP:10001"/>
        <dbReference type="ChEBI" id="CHEBI:15377"/>
        <dbReference type="ChEBI" id="CHEBI:15378"/>
        <dbReference type="ChEBI" id="CHEBI:33737"/>
        <dbReference type="ChEBI" id="CHEBI:33738"/>
        <dbReference type="ChEBI" id="CHEBI:128753"/>
        <dbReference type="ChEBI" id="CHEBI:128769"/>
        <dbReference type="EC" id="1.17.7.4"/>
    </reaction>
</comment>
<comment type="catalytic activity">
    <reaction evidence="1">
        <text>dimethylallyl diphosphate + 2 oxidized [2Fe-2S]-[ferredoxin] + H2O = (2E)-4-hydroxy-3-methylbut-2-enyl diphosphate + 2 reduced [2Fe-2S]-[ferredoxin] + 2 H(+)</text>
        <dbReference type="Rhea" id="RHEA:24825"/>
        <dbReference type="Rhea" id="RHEA-COMP:10000"/>
        <dbReference type="Rhea" id="RHEA-COMP:10001"/>
        <dbReference type="ChEBI" id="CHEBI:15377"/>
        <dbReference type="ChEBI" id="CHEBI:15378"/>
        <dbReference type="ChEBI" id="CHEBI:33737"/>
        <dbReference type="ChEBI" id="CHEBI:33738"/>
        <dbReference type="ChEBI" id="CHEBI:57623"/>
        <dbReference type="ChEBI" id="CHEBI:128753"/>
        <dbReference type="EC" id="1.17.7.4"/>
    </reaction>
</comment>
<comment type="cofactor">
    <cofactor evidence="1">
        <name>[4Fe-4S] cluster</name>
        <dbReference type="ChEBI" id="CHEBI:49883"/>
    </cofactor>
    <text evidence="1">Binds 1 [4Fe-4S] cluster per subunit.</text>
</comment>
<comment type="pathway">
    <text evidence="1">Isoprenoid biosynthesis; dimethylallyl diphosphate biosynthesis; dimethylallyl diphosphate from (2E)-4-hydroxy-3-methylbutenyl diphosphate: step 1/1.</text>
</comment>
<comment type="pathway">
    <text evidence="1">Isoprenoid biosynthesis; isopentenyl diphosphate biosynthesis via DXP pathway; isopentenyl diphosphate from 1-deoxy-D-xylulose 5-phosphate: step 6/6.</text>
</comment>
<comment type="similarity">
    <text evidence="1">Belongs to the IspH family.</text>
</comment>
<protein>
    <recommendedName>
        <fullName evidence="1">4-hydroxy-3-methylbut-2-enyl diphosphate reductase</fullName>
        <shortName evidence="1">HMBPP reductase</shortName>
        <ecNumber evidence="1">1.17.7.4</ecNumber>
    </recommendedName>
</protein>
<feature type="chain" id="PRO_1000021146" description="4-hydroxy-3-methylbut-2-enyl diphosphate reductase">
    <location>
        <begin position="1"/>
        <end position="279"/>
    </location>
</feature>
<feature type="active site" description="Proton donor" evidence="1">
    <location>
        <position position="124"/>
    </location>
</feature>
<feature type="binding site" evidence="1">
    <location>
        <position position="12"/>
    </location>
    <ligand>
        <name>[4Fe-4S] cluster</name>
        <dbReference type="ChEBI" id="CHEBI:49883"/>
    </ligand>
</feature>
<feature type="binding site" evidence="1">
    <location>
        <position position="40"/>
    </location>
    <ligand>
        <name>(2E)-4-hydroxy-3-methylbut-2-enyl diphosphate</name>
        <dbReference type="ChEBI" id="CHEBI:128753"/>
    </ligand>
</feature>
<feature type="binding site" evidence="1">
    <location>
        <position position="40"/>
    </location>
    <ligand>
        <name>dimethylallyl diphosphate</name>
        <dbReference type="ChEBI" id="CHEBI:57623"/>
    </ligand>
</feature>
<feature type="binding site" evidence="1">
    <location>
        <position position="40"/>
    </location>
    <ligand>
        <name>isopentenyl diphosphate</name>
        <dbReference type="ChEBI" id="CHEBI:128769"/>
    </ligand>
</feature>
<feature type="binding site" evidence="1">
    <location>
        <position position="72"/>
    </location>
    <ligand>
        <name>(2E)-4-hydroxy-3-methylbut-2-enyl diphosphate</name>
        <dbReference type="ChEBI" id="CHEBI:128753"/>
    </ligand>
</feature>
<feature type="binding site" evidence="1">
    <location>
        <position position="72"/>
    </location>
    <ligand>
        <name>dimethylallyl diphosphate</name>
        <dbReference type="ChEBI" id="CHEBI:57623"/>
    </ligand>
</feature>
<feature type="binding site" evidence="1">
    <location>
        <position position="72"/>
    </location>
    <ligand>
        <name>isopentenyl diphosphate</name>
        <dbReference type="ChEBI" id="CHEBI:128769"/>
    </ligand>
</feature>
<feature type="binding site" evidence="1">
    <location>
        <position position="94"/>
    </location>
    <ligand>
        <name>[4Fe-4S] cluster</name>
        <dbReference type="ChEBI" id="CHEBI:49883"/>
    </ligand>
</feature>
<feature type="binding site" evidence="1">
    <location>
        <position position="122"/>
    </location>
    <ligand>
        <name>(2E)-4-hydroxy-3-methylbut-2-enyl diphosphate</name>
        <dbReference type="ChEBI" id="CHEBI:128753"/>
    </ligand>
</feature>
<feature type="binding site" evidence="1">
    <location>
        <position position="122"/>
    </location>
    <ligand>
        <name>dimethylallyl diphosphate</name>
        <dbReference type="ChEBI" id="CHEBI:57623"/>
    </ligand>
</feature>
<feature type="binding site" evidence="1">
    <location>
        <position position="122"/>
    </location>
    <ligand>
        <name>isopentenyl diphosphate</name>
        <dbReference type="ChEBI" id="CHEBI:128769"/>
    </ligand>
</feature>
<feature type="binding site" evidence="1">
    <location>
        <position position="161"/>
    </location>
    <ligand>
        <name>(2E)-4-hydroxy-3-methylbut-2-enyl diphosphate</name>
        <dbReference type="ChEBI" id="CHEBI:128753"/>
    </ligand>
</feature>
<feature type="binding site" evidence="1">
    <location>
        <position position="189"/>
    </location>
    <ligand>
        <name>[4Fe-4S] cluster</name>
        <dbReference type="ChEBI" id="CHEBI:49883"/>
    </ligand>
</feature>
<feature type="binding site" evidence="1">
    <location>
        <position position="217"/>
    </location>
    <ligand>
        <name>(2E)-4-hydroxy-3-methylbut-2-enyl diphosphate</name>
        <dbReference type="ChEBI" id="CHEBI:128753"/>
    </ligand>
</feature>
<feature type="binding site" evidence="1">
    <location>
        <position position="217"/>
    </location>
    <ligand>
        <name>dimethylallyl diphosphate</name>
        <dbReference type="ChEBI" id="CHEBI:57623"/>
    </ligand>
</feature>
<feature type="binding site" evidence="1">
    <location>
        <position position="217"/>
    </location>
    <ligand>
        <name>isopentenyl diphosphate</name>
        <dbReference type="ChEBI" id="CHEBI:128769"/>
    </ligand>
</feature>
<feature type="binding site" evidence="1">
    <location>
        <position position="219"/>
    </location>
    <ligand>
        <name>(2E)-4-hydroxy-3-methylbut-2-enyl diphosphate</name>
        <dbReference type="ChEBI" id="CHEBI:128753"/>
    </ligand>
</feature>
<feature type="binding site" evidence="1">
    <location>
        <position position="219"/>
    </location>
    <ligand>
        <name>dimethylallyl diphosphate</name>
        <dbReference type="ChEBI" id="CHEBI:57623"/>
    </ligand>
</feature>
<feature type="binding site" evidence="1">
    <location>
        <position position="219"/>
    </location>
    <ligand>
        <name>isopentenyl diphosphate</name>
        <dbReference type="ChEBI" id="CHEBI:128769"/>
    </ligand>
</feature>
<feature type="binding site" evidence="1">
    <location>
        <position position="261"/>
    </location>
    <ligand>
        <name>(2E)-4-hydroxy-3-methylbut-2-enyl diphosphate</name>
        <dbReference type="ChEBI" id="CHEBI:128753"/>
    </ligand>
</feature>
<feature type="binding site" evidence="1">
    <location>
        <position position="261"/>
    </location>
    <ligand>
        <name>dimethylallyl diphosphate</name>
        <dbReference type="ChEBI" id="CHEBI:57623"/>
    </ligand>
</feature>
<feature type="binding site" evidence="1">
    <location>
        <position position="261"/>
    </location>
    <ligand>
        <name>isopentenyl diphosphate</name>
        <dbReference type="ChEBI" id="CHEBI:128769"/>
    </ligand>
</feature>
<evidence type="ECO:0000255" key="1">
    <source>
        <dbReference type="HAMAP-Rule" id="MF_00191"/>
    </source>
</evidence>
<dbReference type="EC" id="1.17.7.4" evidence="1"/>
<dbReference type="EMBL" id="CP000142">
    <property type="protein sequence ID" value="ABA89124.1"/>
    <property type="molecule type" value="Genomic_DNA"/>
</dbReference>
<dbReference type="RefSeq" id="WP_011341628.1">
    <property type="nucleotide sequence ID" value="NC_007498.2"/>
</dbReference>
<dbReference type="SMR" id="Q3A3D3"/>
<dbReference type="STRING" id="338963.Pcar_1883"/>
<dbReference type="KEGG" id="pca:Pcar_1883"/>
<dbReference type="eggNOG" id="COG0761">
    <property type="taxonomic scope" value="Bacteria"/>
</dbReference>
<dbReference type="HOGENOM" id="CLU_027486_0_1_7"/>
<dbReference type="OrthoDB" id="9804068at2"/>
<dbReference type="UniPathway" id="UPA00056">
    <property type="reaction ID" value="UER00097"/>
</dbReference>
<dbReference type="UniPathway" id="UPA00059">
    <property type="reaction ID" value="UER00105"/>
</dbReference>
<dbReference type="Proteomes" id="UP000002534">
    <property type="component" value="Chromosome"/>
</dbReference>
<dbReference type="GO" id="GO:0051539">
    <property type="term" value="F:4 iron, 4 sulfur cluster binding"/>
    <property type="evidence" value="ECO:0007669"/>
    <property type="project" value="UniProtKB-UniRule"/>
</dbReference>
<dbReference type="GO" id="GO:0051745">
    <property type="term" value="F:4-hydroxy-3-methylbut-2-enyl diphosphate reductase activity"/>
    <property type="evidence" value="ECO:0007669"/>
    <property type="project" value="UniProtKB-UniRule"/>
</dbReference>
<dbReference type="GO" id="GO:0046872">
    <property type="term" value="F:metal ion binding"/>
    <property type="evidence" value="ECO:0007669"/>
    <property type="project" value="UniProtKB-KW"/>
</dbReference>
<dbReference type="GO" id="GO:0050992">
    <property type="term" value="P:dimethylallyl diphosphate biosynthetic process"/>
    <property type="evidence" value="ECO:0007669"/>
    <property type="project" value="UniProtKB-UniRule"/>
</dbReference>
<dbReference type="GO" id="GO:0019288">
    <property type="term" value="P:isopentenyl diphosphate biosynthetic process, methylerythritol 4-phosphate pathway"/>
    <property type="evidence" value="ECO:0007669"/>
    <property type="project" value="UniProtKB-UniRule"/>
</dbReference>
<dbReference type="GO" id="GO:0016114">
    <property type="term" value="P:terpenoid biosynthetic process"/>
    <property type="evidence" value="ECO:0007669"/>
    <property type="project" value="UniProtKB-UniRule"/>
</dbReference>
<dbReference type="CDD" id="cd13944">
    <property type="entry name" value="lytB_ispH"/>
    <property type="match status" value="1"/>
</dbReference>
<dbReference type="Gene3D" id="3.40.50.11270">
    <property type="match status" value="1"/>
</dbReference>
<dbReference type="Gene3D" id="3.40.1010.20">
    <property type="entry name" value="4-hydroxy-3-methylbut-2-enyl diphosphate reductase, catalytic domain"/>
    <property type="match status" value="2"/>
</dbReference>
<dbReference type="HAMAP" id="MF_00191">
    <property type="entry name" value="IspH"/>
    <property type="match status" value="1"/>
</dbReference>
<dbReference type="InterPro" id="IPR003451">
    <property type="entry name" value="LytB/IspH"/>
</dbReference>
<dbReference type="NCBIfam" id="TIGR00216">
    <property type="entry name" value="ispH_lytB"/>
    <property type="match status" value="1"/>
</dbReference>
<dbReference type="NCBIfam" id="NF002187">
    <property type="entry name" value="PRK01045.1-1"/>
    <property type="match status" value="1"/>
</dbReference>
<dbReference type="PANTHER" id="PTHR30426">
    <property type="entry name" value="4-HYDROXY-3-METHYLBUT-2-ENYL DIPHOSPHATE REDUCTASE"/>
    <property type="match status" value="1"/>
</dbReference>
<dbReference type="PANTHER" id="PTHR30426:SF0">
    <property type="entry name" value="4-HYDROXY-3-METHYLBUT-2-ENYL DIPHOSPHATE REDUCTASE"/>
    <property type="match status" value="1"/>
</dbReference>
<dbReference type="Pfam" id="PF02401">
    <property type="entry name" value="LYTB"/>
    <property type="match status" value="1"/>
</dbReference>
<accession>Q3A3D3</accession>
<reference key="1">
    <citation type="submission" date="2005-10" db="EMBL/GenBank/DDBJ databases">
        <title>Complete sequence of Pelobacter carbinolicus DSM 2380.</title>
        <authorList>
            <person name="Copeland A."/>
            <person name="Lucas S."/>
            <person name="Lapidus A."/>
            <person name="Barry K."/>
            <person name="Detter J.C."/>
            <person name="Glavina T."/>
            <person name="Hammon N."/>
            <person name="Israni S."/>
            <person name="Pitluck S."/>
            <person name="Chertkov O."/>
            <person name="Schmutz J."/>
            <person name="Larimer F."/>
            <person name="Land M."/>
            <person name="Kyrpides N."/>
            <person name="Ivanova N."/>
            <person name="Richardson P."/>
        </authorList>
    </citation>
    <scope>NUCLEOTIDE SEQUENCE [LARGE SCALE GENOMIC DNA]</scope>
    <source>
        <strain>DSM 2380 / NBRC 103641 / GraBd1</strain>
    </source>
</reference>
<organism>
    <name type="scientific">Syntrophotalea carbinolica (strain DSM 2380 / NBRC 103641 / GraBd1)</name>
    <name type="common">Pelobacter carbinolicus</name>
    <dbReference type="NCBI Taxonomy" id="338963"/>
    <lineage>
        <taxon>Bacteria</taxon>
        <taxon>Pseudomonadati</taxon>
        <taxon>Thermodesulfobacteriota</taxon>
        <taxon>Desulfuromonadia</taxon>
        <taxon>Desulfuromonadales</taxon>
        <taxon>Syntrophotaleaceae</taxon>
        <taxon>Syntrophotalea</taxon>
    </lineage>
</organism>
<keyword id="KW-0004">4Fe-4S</keyword>
<keyword id="KW-0408">Iron</keyword>
<keyword id="KW-0411">Iron-sulfur</keyword>
<keyword id="KW-0414">Isoprene biosynthesis</keyword>
<keyword id="KW-0479">Metal-binding</keyword>
<keyword id="KW-0560">Oxidoreductase</keyword>
<keyword id="KW-1185">Reference proteome</keyword>